<organism>
    <name type="scientific">Aliivibrio fischeri (strain MJ11)</name>
    <name type="common">Vibrio fischeri</name>
    <dbReference type="NCBI Taxonomy" id="388396"/>
    <lineage>
        <taxon>Bacteria</taxon>
        <taxon>Pseudomonadati</taxon>
        <taxon>Pseudomonadota</taxon>
        <taxon>Gammaproteobacteria</taxon>
        <taxon>Vibrionales</taxon>
        <taxon>Vibrionaceae</taxon>
        <taxon>Aliivibrio</taxon>
    </lineage>
</organism>
<dbReference type="EC" id="3.6.1.40" evidence="1"/>
<dbReference type="EMBL" id="CP001139">
    <property type="protein sequence ID" value="ACH65095.1"/>
    <property type="molecule type" value="Genomic_DNA"/>
</dbReference>
<dbReference type="RefSeq" id="WP_012532822.1">
    <property type="nucleotide sequence ID" value="NC_011184.1"/>
</dbReference>
<dbReference type="SMR" id="B5FF86"/>
<dbReference type="KEGG" id="vfm:VFMJ11_0053"/>
<dbReference type="HOGENOM" id="CLU_025908_4_0_6"/>
<dbReference type="UniPathway" id="UPA00908">
    <property type="reaction ID" value="UER00885"/>
</dbReference>
<dbReference type="Proteomes" id="UP000001857">
    <property type="component" value="Chromosome I"/>
</dbReference>
<dbReference type="GO" id="GO:0008894">
    <property type="term" value="F:guanosine-5'-triphosphate,3'-diphosphate diphosphatase activity"/>
    <property type="evidence" value="ECO:0007669"/>
    <property type="project" value="UniProtKB-UniRule"/>
</dbReference>
<dbReference type="GO" id="GO:0015974">
    <property type="term" value="P:guanosine pentaphosphate catabolic process"/>
    <property type="evidence" value="ECO:0007669"/>
    <property type="project" value="InterPro"/>
</dbReference>
<dbReference type="GO" id="GO:0015970">
    <property type="term" value="P:guanosine tetraphosphate biosynthetic process"/>
    <property type="evidence" value="ECO:0007669"/>
    <property type="project" value="UniProtKB-UniRule"/>
</dbReference>
<dbReference type="GO" id="GO:0015949">
    <property type="term" value="P:nucleobase-containing small molecule interconversion"/>
    <property type="evidence" value="ECO:0007669"/>
    <property type="project" value="TreeGrafter"/>
</dbReference>
<dbReference type="FunFam" id="3.30.420.150:FF:000001">
    <property type="entry name" value="Guanosine-5'-triphosphate,3'-diphosphate pyrophosphatase"/>
    <property type="match status" value="1"/>
</dbReference>
<dbReference type="FunFam" id="3.30.420.40:FF:000023">
    <property type="entry name" value="Guanosine-5'-triphosphate,3'-diphosphate pyrophosphatase"/>
    <property type="match status" value="1"/>
</dbReference>
<dbReference type="Gene3D" id="3.30.420.40">
    <property type="match status" value="1"/>
</dbReference>
<dbReference type="Gene3D" id="3.30.420.150">
    <property type="entry name" value="Exopolyphosphatase. Domain 2"/>
    <property type="match status" value="1"/>
</dbReference>
<dbReference type="Gene3D" id="1.10.3210.10">
    <property type="entry name" value="Hypothetical protein af1432"/>
    <property type="match status" value="1"/>
</dbReference>
<dbReference type="HAMAP" id="MF_01550">
    <property type="entry name" value="GppA"/>
    <property type="match status" value="1"/>
</dbReference>
<dbReference type="InterPro" id="IPR043129">
    <property type="entry name" value="ATPase_NBD"/>
</dbReference>
<dbReference type="InterPro" id="IPR050273">
    <property type="entry name" value="GppA/Ppx_hydrolase"/>
</dbReference>
<dbReference type="InterPro" id="IPR023709">
    <property type="entry name" value="Guo-5TP_3DP_PyrP"/>
</dbReference>
<dbReference type="InterPro" id="IPR048950">
    <property type="entry name" value="Ppx_GppA_C"/>
</dbReference>
<dbReference type="InterPro" id="IPR003695">
    <property type="entry name" value="Ppx_GppA_N"/>
</dbReference>
<dbReference type="InterPro" id="IPR030673">
    <property type="entry name" value="PyroPPase_GppA_Ppx"/>
</dbReference>
<dbReference type="NCBIfam" id="NF008260">
    <property type="entry name" value="PRK11031.1"/>
    <property type="match status" value="1"/>
</dbReference>
<dbReference type="PANTHER" id="PTHR30005">
    <property type="entry name" value="EXOPOLYPHOSPHATASE"/>
    <property type="match status" value="1"/>
</dbReference>
<dbReference type="PANTHER" id="PTHR30005:SF0">
    <property type="entry name" value="RETROGRADE REGULATION PROTEIN 2"/>
    <property type="match status" value="1"/>
</dbReference>
<dbReference type="Pfam" id="PF02541">
    <property type="entry name" value="Ppx-GppA"/>
    <property type="match status" value="1"/>
</dbReference>
<dbReference type="Pfam" id="PF21447">
    <property type="entry name" value="Ppx-GppA_III"/>
    <property type="match status" value="1"/>
</dbReference>
<dbReference type="PIRSF" id="PIRSF001267">
    <property type="entry name" value="Pyrophosphatase_GppA_Ppx"/>
    <property type="match status" value="1"/>
</dbReference>
<dbReference type="SUPFAM" id="SSF53067">
    <property type="entry name" value="Actin-like ATPase domain"/>
    <property type="match status" value="2"/>
</dbReference>
<dbReference type="SUPFAM" id="SSF109604">
    <property type="entry name" value="HD-domain/PDEase-like"/>
    <property type="match status" value="1"/>
</dbReference>
<sequence>MKSSTIPPMYAAIDLGSNSFHMLVVRHINGSVQTMAKIKRKVRLAAGLNENNTLSHEAMQRGWDCLSLFAERLQDIPVENIRIVGTATLRVASNVDIFLEKANQILGHNINVIEGEEEARMIYQGVAHTSGGNGRRLVVDIGGASTELIIGEGFEAQALTSLKMGCVTWLEGYFKDRALTQKNFDSAIAGAKETLAPILQQYTDLGWQTCVGASGTVQALQEIMLAQGMDEVITLAKLKRLQKQAMQYEHLEELDIDGLTLERALVFPSGLSILIAIFELLNIDSMTLAGGALREGLCYGMIDELQHDEVCQRTIKSTQQRYQLDVEYAQQVTDLSIQLVQQCGNDWLTEPQALPLLTAATQLHEIGMCIDYKKGGEHSAYLINALDLPGFTRAQKHLLGELLRRYREYFSAMPTQHAVSDISAQRMLRILRLAIILTHRRDVNLAPAVTLSEKNDVLSLSIDGTWLAANPLTRSELEIEADKQTNIGWDLVIDARD</sequence>
<accession>B5FF86</accession>
<protein>
    <recommendedName>
        <fullName evidence="1">Guanosine-5'-triphosphate,3'-diphosphate pyrophosphatase</fullName>
        <ecNumber evidence="1">3.6.1.40</ecNumber>
    </recommendedName>
    <alternativeName>
        <fullName evidence="1">Guanosine pentaphosphate phosphohydrolase</fullName>
    </alternativeName>
    <alternativeName>
        <fullName evidence="1">pppGpp-5'-phosphohydrolase</fullName>
    </alternativeName>
</protein>
<gene>
    <name evidence="1" type="primary">gppA</name>
    <name type="ordered locus">VFMJ11_0053</name>
</gene>
<keyword id="KW-0378">Hydrolase</keyword>
<feature type="chain" id="PRO_1000192541" description="Guanosine-5'-triphosphate,3'-diphosphate pyrophosphatase">
    <location>
        <begin position="1"/>
        <end position="497"/>
    </location>
</feature>
<reference key="1">
    <citation type="submission" date="2008-08" db="EMBL/GenBank/DDBJ databases">
        <title>Complete sequence of Vibrio fischeri strain MJ11.</title>
        <authorList>
            <person name="Mandel M.J."/>
            <person name="Stabb E.V."/>
            <person name="Ruby E.G."/>
            <person name="Ferriera S."/>
            <person name="Johnson J."/>
            <person name="Kravitz S."/>
            <person name="Beeson K."/>
            <person name="Sutton G."/>
            <person name="Rogers Y.-H."/>
            <person name="Friedman R."/>
            <person name="Frazier M."/>
            <person name="Venter J.C."/>
        </authorList>
    </citation>
    <scope>NUCLEOTIDE SEQUENCE [LARGE SCALE GENOMIC DNA]</scope>
    <source>
        <strain>MJ11</strain>
    </source>
</reference>
<name>GPPA_ALIFM</name>
<evidence type="ECO:0000255" key="1">
    <source>
        <dbReference type="HAMAP-Rule" id="MF_01550"/>
    </source>
</evidence>
<comment type="function">
    <text evidence="1">Catalyzes the conversion of pppGpp to ppGpp. Guanosine pentaphosphate (pppGpp) is a cytoplasmic signaling molecule which together with ppGpp controls the 'stringent response', an adaptive process that allows bacteria to respond to amino acid starvation, resulting in the coordinated regulation of numerous cellular activities.</text>
</comment>
<comment type="catalytic activity">
    <reaction evidence="1">
        <text>guanosine 3'-diphosphate 5'-triphosphate + H2O = guanosine 3',5'-bis(diphosphate) + phosphate + H(+)</text>
        <dbReference type="Rhea" id="RHEA:13073"/>
        <dbReference type="ChEBI" id="CHEBI:15377"/>
        <dbReference type="ChEBI" id="CHEBI:15378"/>
        <dbReference type="ChEBI" id="CHEBI:43474"/>
        <dbReference type="ChEBI" id="CHEBI:77828"/>
        <dbReference type="ChEBI" id="CHEBI:142410"/>
        <dbReference type="EC" id="3.6.1.40"/>
    </reaction>
</comment>
<comment type="pathway">
    <text evidence="1">Purine metabolism; ppGpp biosynthesis; ppGpp from GTP: step 2/2.</text>
</comment>
<comment type="similarity">
    <text evidence="1">Belongs to the GppA/Ppx family. GppA subfamily.</text>
</comment>
<proteinExistence type="inferred from homology"/>